<name>RS15_STRPN</name>
<accession>Q97PI9</accession>
<feature type="chain" id="PRO_0000115553" description="Small ribosomal subunit protein uS15">
    <location>
        <begin position="1"/>
        <end position="89"/>
    </location>
</feature>
<comment type="function">
    <text evidence="1">One of the primary rRNA binding proteins, it binds directly to 16S rRNA where it helps nucleate assembly of the platform of the 30S subunit by binding and bridging several RNA helices of the 16S rRNA.</text>
</comment>
<comment type="function">
    <text evidence="1">Forms an intersubunit bridge (bridge B4) with the 23S rRNA of the 50S subunit in the ribosome.</text>
</comment>
<comment type="subunit">
    <text evidence="1">Part of the 30S ribosomal subunit. Forms a bridge to the 50S subunit in the 70S ribosome, contacting the 23S rRNA.</text>
</comment>
<comment type="similarity">
    <text evidence="1">Belongs to the universal ribosomal protein uS15 family.</text>
</comment>
<reference key="1">
    <citation type="journal article" date="2001" name="Science">
        <title>Complete genome sequence of a virulent isolate of Streptococcus pneumoniae.</title>
        <authorList>
            <person name="Tettelin H."/>
            <person name="Nelson K.E."/>
            <person name="Paulsen I.T."/>
            <person name="Eisen J.A."/>
            <person name="Read T.D."/>
            <person name="Peterson S.N."/>
            <person name="Heidelberg J.F."/>
            <person name="DeBoy R.T."/>
            <person name="Haft D.H."/>
            <person name="Dodson R.J."/>
            <person name="Durkin A.S."/>
            <person name="Gwinn M.L."/>
            <person name="Kolonay J.F."/>
            <person name="Nelson W.C."/>
            <person name="Peterson J.D."/>
            <person name="Umayam L.A."/>
            <person name="White O."/>
            <person name="Salzberg S.L."/>
            <person name="Lewis M.R."/>
            <person name="Radune D."/>
            <person name="Holtzapple E.K."/>
            <person name="Khouri H.M."/>
            <person name="Wolf A.M."/>
            <person name="Utterback T.R."/>
            <person name="Hansen C.L."/>
            <person name="McDonald L.A."/>
            <person name="Feldblyum T.V."/>
            <person name="Angiuoli S.V."/>
            <person name="Dickinson T."/>
            <person name="Hickey E.K."/>
            <person name="Holt I.E."/>
            <person name="Loftus B.J."/>
            <person name="Yang F."/>
            <person name="Smith H.O."/>
            <person name="Venter J.C."/>
            <person name="Dougherty B.A."/>
            <person name="Morrison D.A."/>
            <person name="Hollingshead S.K."/>
            <person name="Fraser C.M."/>
        </authorList>
    </citation>
    <scope>NUCLEOTIDE SEQUENCE [LARGE SCALE GENOMIC DNA]</scope>
    <source>
        <strain>ATCC BAA-334 / TIGR4</strain>
    </source>
</reference>
<sequence length="89" mass="10535">MAISKEKKNEIIAQYARHEGDTGSVEVQVAVLTWEINHLNEHIKQHKKDHATYRGLMKKIGRRRNLLAYLRKNDVNRYRELINSLGLRR</sequence>
<gene>
    <name evidence="1" type="primary">rpsO</name>
    <name type="ordered locus">SP_1626</name>
</gene>
<proteinExistence type="inferred from homology"/>
<evidence type="ECO:0000255" key="1">
    <source>
        <dbReference type="HAMAP-Rule" id="MF_01343"/>
    </source>
</evidence>
<evidence type="ECO:0000305" key="2"/>
<dbReference type="EMBL" id="AE005672">
    <property type="protein sequence ID" value="AAK75706.1"/>
    <property type="molecule type" value="Genomic_DNA"/>
</dbReference>
<dbReference type="PIR" id="A95189">
    <property type="entry name" value="A95189"/>
</dbReference>
<dbReference type="PIR" id="B98055">
    <property type="entry name" value="B98055"/>
</dbReference>
<dbReference type="RefSeq" id="WP_001018251.1">
    <property type="nucleotide sequence ID" value="NZ_CP155539.1"/>
</dbReference>
<dbReference type="SMR" id="Q97PI9"/>
<dbReference type="PaxDb" id="170187-SP_1626"/>
<dbReference type="EnsemblBacteria" id="AAK75706">
    <property type="protein sequence ID" value="AAK75706"/>
    <property type="gene ID" value="SP_1626"/>
</dbReference>
<dbReference type="GeneID" id="93847676"/>
<dbReference type="KEGG" id="spn:SP_1626"/>
<dbReference type="eggNOG" id="COG0184">
    <property type="taxonomic scope" value="Bacteria"/>
</dbReference>
<dbReference type="PhylomeDB" id="Q97PI9"/>
<dbReference type="BioCyc" id="SPNE170187:G1FZB-1645-MONOMER"/>
<dbReference type="Proteomes" id="UP000000585">
    <property type="component" value="Chromosome"/>
</dbReference>
<dbReference type="GO" id="GO:0022627">
    <property type="term" value="C:cytosolic small ribosomal subunit"/>
    <property type="evidence" value="ECO:0007669"/>
    <property type="project" value="TreeGrafter"/>
</dbReference>
<dbReference type="GO" id="GO:0019843">
    <property type="term" value="F:rRNA binding"/>
    <property type="evidence" value="ECO:0007669"/>
    <property type="project" value="UniProtKB-UniRule"/>
</dbReference>
<dbReference type="GO" id="GO:0003735">
    <property type="term" value="F:structural constituent of ribosome"/>
    <property type="evidence" value="ECO:0007669"/>
    <property type="project" value="InterPro"/>
</dbReference>
<dbReference type="GO" id="GO:0006412">
    <property type="term" value="P:translation"/>
    <property type="evidence" value="ECO:0007669"/>
    <property type="project" value="UniProtKB-UniRule"/>
</dbReference>
<dbReference type="CDD" id="cd00353">
    <property type="entry name" value="Ribosomal_S15p_S13e"/>
    <property type="match status" value="1"/>
</dbReference>
<dbReference type="FunFam" id="1.10.287.10:FF:000002">
    <property type="entry name" value="30S ribosomal protein S15"/>
    <property type="match status" value="1"/>
</dbReference>
<dbReference type="Gene3D" id="6.10.250.3130">
    <property type="match status" value="1"/>
</dbReference>
<dbReference type="Gene3D" id="1.10.287.10">
    <property type="entry name" value="S15/NS1, RNA-binding"/>
    <property type="match status" value="1"/>
</dbReference>
<dbReference type="HAMAP" id="MF_01343_B">
    <property type="entry name" value="Ribosomal_uS15_B"/>
    <property type="match status" value="1"/>
</dbReference>
<dbReference type="InterPro" id="IPR000589">
    <property type="entry name" value="Ribosomal_uS15"/>
</dbReference>
<dbReference type="InterPro" id="IPR005290">
    <property type="entry name" value="Ribosomal_uS15_bac-type"/>
</dbReference>
<dbReference type="InterPro" id="IPR009068">
    <property type="entry name" value="uS15_NS1_RNA-bd_sf"/>
</dbReference>
<dbReference type="NCBIfam" id="TIGR00952">
    <property type="entry name" value="S15_bact"/>
    <property type="match status" value="1"/>
</dbReference>
<dbReference type="PANTHER" id="PTHR23321">
    <property type="entry name" value="RIBOSOMAL PROTEIN S15, BACTERIAL AND ORGANELLAR"/>
    <property type="match status" value="1"/>
</dbReference>
<dbReference type="PANTHER" id="PTHR23321:SF26">
    <property type="entry name" value="SMALL RIBOSOMAL SUBUNIT PROTEIN US15M"/>
    <property type="match status" value="1"/>
</dbReference>
<dbReference type="Pfam" id="PF00312">
    <property type="entry name" value="Ribosomal_S15"/>
    <property type="match status" value="1"/>
</dbReference>
<dbReference type="SMART" id="SM01387">
    <property type="entry name" value="Ribosomal_S15"/>
    <property type="match status" value="1"/>
</dbReference>
<dbReference type="SUPFAM" id="SSF47060">
    <property type="entry name" value="S15/NS1 RNA-binding domain"/>
    <property type="match status" value="1"/>
</dbReference>
<dbReference type="PROSITE" id="PS00362">
    <property type="entry name" value="RIBOSOMAL_S15"/>
    <property type="match status" value="1"/>
</dbReference>
<organism>
    <name type="scientific">Streptococcus pneumoniae serotype 4 (strain ATCC BAA-334 / TIGR4)</name>
    <dbReference type="NCBI Taxonomy" id="170187"/>
    <lineage>
        <taxon>Bacteria</taxon>
        <taxon>Bacillati</taxon>
        <taxon>Bacillota</taxon>
        <taxon>Bacilli</taxon>
        <taxon>Lactobacillales</taxon>
        <taxon>Streptococcaceae</taxon>
        <taxon>Streptococcus</taxon>
    </lineage>
</organism>
<keyword id="KW-1185">Reference proteome</keyword>
<keyword id="KW-0687">Ribonucleoprotein</keyword>
<keyword id="KW-0689">Ribosomal protein</keyword>
<keyword id="KW-0694">RNA-binding</keyword>
<keyword id="KW-0699">rRNA-binding</keyword>
<protein>
    <recommendedName>
        <fullName evidence="1">Small ribosomal subunit protein uS15</fullName>
    </recommendedName>
    <alternativeName>
        <fullName evidence="2">30S ribosomal protein S15</fullName>
    </alternativeName>
</protein>